<accession>P17499</accession>
<dbReference type="EMBL" id="M22978">
    <property type="protein sequence ID" value="AAA02580.1"/>
    <property type="molecule type" value="Unassigned_DNA"/>
</dbReference>
<dbReference type="EMBL" id="L22858">
    <property type="protein sequence ID" value="AAA66719.1"/>
    <property type="molecule type" value="Genomic_DNA"/>
</dbReference>
<dbReference type="PIR" id="A31476">
    <property type="entry name" value="VCNVL1"/>
</dbReference>
<dbReference type="PDB" id="8I8A">
    <property type="method" value="EM"/>
    <property type="resolution" value="3.21 A"/>
    <property type="chains" value="A/B=1-347"/>
</dbReference>
<dbReference type="PDB" id="8I8B">
    <property type="method" value="EM"/>
    <property type="resolution" value="4.31 A"/>
    <property type="chains" value="W/X/Y/Z=1-347"/>
</dbReference>
<dbReference type="PDB" id="8VWH">
    <property type="method" value="EM"/>
    <property type="resolution" value="3.06 A"/>
    <property type="chains" value="A/C/E/G/I/K/M/O=1-347"/>
</dbReference>
<dbReference type="PDB" id="8VWI">
    <property type="method" value="EM"/>
    <property type="resolution" value="4.71 A"/>
    <property type="chains" value="A/B/C/D/E/F/V/W/X/Y/Z/a=1-347"/>
</dbReference>
<dbReference type="PDB" id="8VWJ">
    <property type="method" value="EM"/>
    <property type="resolution" value="4.78 A"/>
    <property type="chains" value="A/B/C/D/E/F/V/W/X/Y/Z/a=1-347"/>
</dbReference>
<dbReference type="PDBsum" id="8I8A"/>
<dbReference type="PDBsum" id="8I8B"/>
<dbReference type="PDBsum" id="8VWH"/>
<dbReference type="PDBsum" id="8VWI"/>
<dbReference type="PDBsum" id="8VWJ"/>
<dbReference type="EMDB" id="EMD-43585"/>
<dbReference type="EMDB" id="EMD-43586"/>
<dbReference type="EMDB" id="EMD-43588"/>
<dbReference type="EMDB" id="EMD-43589"/>
<dbReference type="SMR" id="P17499"/>
<dbReference type="KEGG" id="vg:1403922"/>
<dbReference type="OrthoDB" id="9419at10239"/>
<dbReference type="Proteomes" id="UP000008292">
    <property type="component" value="Segment"/>
</dbReference>
<dbReference type="GO" id="GO:0044204">
    <property type="term" value="C:host cell nuclear matrix"/>
    <property type="evidence" value="ECO:0000314"/>
    <property type="project" value="UniProtKB"/>
</dbReference>
<dbReference type="GO" id="GO:0019028">
    <property type="term" value="C:viral capsid"/>
    <property type="evidence" value="ECO:0007669"/>
    <property type="project" value="UniProtKB-KW"/>
</dbReference>
<dbReference type="GO" id="GO:0044423">
    <property type="term" value="C:virion component"/>
    <property type="evidence" value="ECO:0000314"/>
    <property type="project" value="UniProtKB"/>
</dbReference>
<dbReference type="GO" id="GO:0005198">
    <property type="term" value="F:structural molecule activity"/>
    <property type="evidence" value="ECO:0007669"/>
    <property type="project" value="InterPro"/>
</dbReference>
<dbReference type="InterPro" id="IPR007589">
    <property type="entry name" value="Baculo_VP39"/>
</dbReference>
<dbReference type="Pfam" id="PF04501">
    <property type="entry name" value="Baculo_VP39"/>
    <property type="match status" value="1"/>
</dbReference>
<gene>
    <name type="primary">P39</name>
    <name type="synonym">VP39</name>
    <name type="ORF">ORF89</name>
</gene>
<keyword id="KW-0002">3D-structure</keyword>
<keyword id="KW-0167">Capsid protein</keyword>
<keyword id="KW-0426">Late protein</keyword>
<keyword id="KW-1185">Reference proteome</keyword>
<keyword id="KW-0946">Virion</keyword>
<feature type="chain" id="PRO_0000132900" description="Major capsid protein">
    <location>
        <begin position="1"/>
        <end position="347"/>
    </location>
</feature>
<feature type="helix" evidence="4">
    <location>
        <begin position="19"/>
        <end position="22"/>
    </location>
</feature>
<feature type="strand" evidence="3">
    <location>
        <begin position="28"/>
        <end position="30"/>
    </location>
</feature>
<feature type="helix" evidence="4">
    <location>
        <begin position="38"/>
        <end position="40"/>
    </location>
</feature>
<feature type="helix" evidence="4">
    <location>
        <begin position="50"/>
        <end position="57"/>
    </location>
</feature>
<feature type="strand" evidence="4">
    <location>
        <begin position="58"/>
        <end position="67"/>
    </location>
</feature>
<feature type="strand" evidence="4">
    <location>
        <begin position="69"/>
        <end position="71"/>
    </location>
</feature>
<feature type="strand" evidence="4">
    <location>
        <begin position="73"/>
        <end position="81"/>
    </location>
</feature>
<feature type="helix" evidence="4">
    <location>
        <begin position="89"/>
        <end position="92"/>
    </location>
</feature>
<feature type="strand" evidence="4">
    <location>
        <begin position="93"/>
        <end position="96"/>
    </location>
</feature>
<feature type="turn" evidence="4">
    <location>
        <begin position="98"/>
        <end position="100"/>
    </location>
</feature>
<feature type="helix" evidence="4">
    <location>
        <begin position="101"/>
        <end position="105"/>
    </location>
</feature>
<feature type="turn" evidence="4">
    <location>
        <begin position="107"/>
        <end position="109"/>
    </location>
</feature>
<feature type="helix" evidence="4">
    <location>
        <begin position="112"/>
        <end position="121"/>
    </location>
</feature>
<feature type="helix" evidence="4">
    <location>
        <begin position="125"/>
        <end position="134"/>
    </location>
</feature>
<feature type="turn" evidence="4">
    <location>
        <begin position="142"/>
        <end position="145"/>
    </location>
</feature>
<feature type="helix" evidence="4">
    <location>
        <begin position="146"/>
        <end position="163"/>
    </location>
</feature>
<feature type="strand" evidence="3">
    <location>
        <begin position="165"/>
        <end position="169"/>
    </location>
</feature>
<feature type="strand" evidence="4">
    <location>
        <begin position="175"/>
        <end position="180"/>
    </location>
</feature>
<feature type="helix" evidence="4">
    <location>
        <begin position="185"/>
        <end position="187"/>
    </location>
</feature>
<feature type="helix" evidence="4">
    <location>
        <begin position="192"/>
        <end position="198"/>
    </location>
</feature>
<feature type="helix" evidence="4">
    <location>
        <begin position="202"/>
        <end position="211"/>
    </location>
</feature>
<feature type="strand" evidence="4">
    <location>
        <begin position="215"/>
        <end position="219"/>
    </location>
</feature>
<feature type="strand" evidence="4">
    <location>
        <begin position="222"/>
        <end position="225"/>
    </location>
</feature>
<feature type="strand" evidence="4">
    <location>
        <begin position="233"/>
        <end position="235"/>
    </location>
</feature>
<feature type="strand" evidence="4">
    <location>
        <begin position="238"/>
        <end position="240"/>
    </location>
</feature>
<feature type="strand" evidence="4">
    <location>
        <begin position="244"/>
        <end position="247"/>
    </location>
</feature>
<feature type="strand" evidence="3">
    <location>
        <begin position="261"/>
        <end position="263"/>
    </location>
</feature>
<feature type="helix" evidence="4">
    <location>
        <begin position="279"/>
        <end position="284"/>
    </location>
</feature>
<feature type="strand" evidence="4">
    <location>
        <begin position="300"/>
        <end position="304"/>
    </location>
</feature>
<sequence length="347" mass="38951">MALVPVGMAPRQMRVNRCIFASIVSFDACITYKSPCSPDAYHDDGWFICNNHLIKRFKMSKMVLPIFDEDDNQFKMTIARHLVGNKERGIKRILIPSATNYQDVFNLNSMMQAEQLIFHLIYNNENAVNTICDNLKYTEGFTSNTQRVIHSVYATTKSILDTTNPNTFCSRVSRDELRFFDVTNARALRGGAGDQLFNNYSGFLQNLIRRAVAPEYLQIDTEELRFRNCATCIIDETGLVASVPDGPELYNPIRSSDIMRSQPNRLQIRNVLKFEGDTRELDRTLSGYEEYPTYVPLFLGYQIINSENNFLRNDFIPRANPNATLGGGAVAGPAPGVAGEAGGGIAV</sequence>
<name>MCP_NPVAC</name>
<reference key="1">
    <citation type="journal article" date="1989" name="J. Virol.">
        <title>Identification, sequence, and transcriptional mapping of the major capsid protein gene of the baculovirus Autographa californica nuclear polyhedrosis virus.</title>
        <authorList>
            <person name="Thiem S.M."/>
            <person name="Miller L.K."/>
        </authorList>
    </citation>
    <scope>NUCLEOTIDE SEQUENCE</scope>
    <source>
        <strain>L1</strain>
    </source>
</reference>
<reference key="2">
    <citation type="submission" date="1989-03" db="EMBL/GenBank/DDBJ databases">
        <authorList>
            <person name="Miller L.K."/>
        </authorList>
    </citation>
    <scope>SEQUENCE REVISION</scope>
</reference>
<reference key="3">
    <citation type="journal article" date="1994" name="Virology">
        <title>The complete DNA sequence of Autographa californica nuclear polyhedrosis virus.</title>
        <authorList>
            <person name="Ayres M.D."/>
            <person name="Howard S.C."/>
            <person name="Kuzio J."/>
            <person name="Lopez-Ferber M."/>
            <person name="Possee R.D."/>
        </authorList>
    </citation>
    <scope>NUCLEOTIDE SEQUENCE [LARGE SCALE GENOMIC DNA]</scope>
    <source>
        <strain>C6</strain>
    </source>
</reference>
<reference key="4">
    <citation type="journal article" date="1998" name="Virology">
        <title>Actin binding and nucleation by Autographa california M nucleopolyhedrovirus.</title>
        <authorList>
            <person name="Lanier L.M."/>
            <person name="Volkman L.E."/>
        </authorList>
    </citation>
    <scope>INTERACTION WITH HOST ACTIN</scope>
</reference>
<reference key="5">
    <citation type="journal article" date="2008" name="J. Virol.">
        <title>Autographa californica multiple nucleopolyhedrovirus 38K is a novel nucleocapsid protein that interacts with VP1054, VP39, VP80, and itself.</title>
        <authorList>
            <person name="Wu W."/>
            <person name="Liang H."/>
            <person name="Kan J."/>
            <person name="Liu C."/>
            <person name="Yuan M."/>
            <person name="Liang C."/>
            <person name="Yang K."/>
            <person name="Pang Y."/>
        </authorList>
    </citation>
    <scope>INTERACTION WITH PROTEIN 38K</scope>
</reference>
<reference key="6">
    <citation type="journal article" date="2014" name="J. Virol.">
        <title>Autographa californica multiple nucleopolyhedrovirus orf132 encodes a nucleocapsid-associated protein required for budded-virus and multiply enveloped occlusion-derived virus production.</title>
        <authorList>
            <person name="Yang M."/>
            <person name="Wang S."/>
            <person name="Yue X.L."/>
            <person name="Li L.L."/>
        </authorList>
    </citation>
    <scope>SUBCELLULAR LOCATION</scope>
</reference>
<organism>
    <name type="scientific">Autographa californica nuclear polyhedrosis virus</name>
    <name type="common">AcMNPV</name>
    <dbReference type="NCBI Taxonomy" id="46015"/>
    <lineage>
        <taxon>Viruses</taxon>
        <taxon>Viruses incertae sedis</taxon>
        <taxon>Naldaviricetes</taxon>
        <taxon>Lefavirales</taxon>
        <taxon>Baculoviridae</taxon>
        <taxon>Alphabaculovirus</taxon>
        <taxon>Alphabaculovirus aucalifornicae</taxon>
    </lineage>
</organism>
<protein>
    <recommendedName>
        <fullName>Major capsid protein</fullName>
    </recommendedName>
</protein>
<comment type="function">
    <text>Most abundant structural protein of the nucleocapsid produced during the infection cycle. The monomers are arranged in stacked rings around the nucleoprotein core.</text>
</comment>
<comment type="subcellular location">
    <subcellularLocation>
        <location evidence="1">Virion</location>
    </subcellularLocation>
</comment>
<comment type="miscellaneous">
    <text>Expressed late in infection.</text>
</comment>
<comment type="similarity">
    <text evidence="2">Belongs to the baculoviridae major capsid protein family.</text>
</comment>
<organismHost>
    <name type="scientific">Lepidoptera</name>
    <name type="common">butterflies and moths</name>
    <dbReference type="NCBI Taxonomy" id="7088"/>
</organismHost>
<evidence type="ECO:0000269" key="1">
    <source>
    </source>
</evidence>
<evidence type="ECO:0000305" key="2"/>
<evidence type="ECO:0007829" key="3">
    <source>
        <dbReference type="PDB" id="8I8A"/>
    </source>
</evidence>
<evidence type="ECO:0007829" key="4">
    <source>
        <dbReference type="PDB" id="8VWH"/>
    </source>
</evidence>
<proteinExistence type="evidence at protein level"/>